<name>ACT_SPOLI</name>
<accession>Q11212</accession>
<evidence type="ECO:0000250" key="1"/>
<evidence type="ECO:0000250" key="2">
    <source>
        <dbReference type="UniProtKB" id="P68137"/>
    </source>
</evidence>
<evidence type="ECO:0000305" key="3"/>
<sequence>VDNGSGMCKAGFAGDDAPRAVFPSIVGRPRHQGVMVGMGQKDSYVGDEAQSKRGILTLKYPIEHGIITNWDDMEKIWHHTFYNELRVAPEEHPVLLTEAPLNPKANREKMTQIMFETFNSPAMYVAIQAVLSLYASGRTTGIVLDSGDGVSHTVPIYEGYALPH</sequence>
<comment type="function">
    <text>Actins are highly conserved proteins that are involved in various types of cell motility and are ubiquitously expressed in all eukaryotic cells.</text>
</comment>
<comment type="catalytic activity">
    <reaction evidence="2">
        <text>ATP + H2O = ADP + phosphate + H(+)</text>
        <dbReference type="Rhea" id="RHEA:13065"/>
        <dbReference type="ChEBI" id="CHEBI:15377"/>
        <dbReference type="ChEBI" id="CHEBI:15378"/>
        <dbReference type="ChEBI" id="CHEBI:30616"/>
        <dbReference type="ChEBI" id="CHEBI:43474"/>
        <dbReference type="ChEBI" id="CHEBI:456216"/>
    </reaction>
</comment>
<comment type="subcellular location">
    <subcellularLocation>
        <location>Cytoplasm</location>
        <location>Cytoskeleton</location>
    </subcellularLocation>
</comment>
<comment type="PTM">
    <text evidence="1">Oxidation of Met-35 to form methionine sulfoxide promotes actin filament depolymerization. Methionine sulfoxide is produced stereospecifically, but it is not known whether the (S)-S-oxide or the (R)-S-oxide is produced (By similarity).</text>
</comment>
<comment type="similarity">
    <text evidence="3">Belongs to the actin family.</text>
</comment>
<proteinExistence type="evidence at transcript level"/>
<protein>
    <recommendedName>
        <fullName>Actin</fullName>
        <ecNumber evidence="2">3.6.4.-</ecNumber>
    </recommendedName>
</protein>
<reference key="1">
    <citation type="submission" date="1994-12" db="EMBL/GenBank/DDBJ databases">
        <authorList>
            <person name="Stettler P."/>
        </authorList>
    </citation>
    <scope>NUCLEOTIDE SEQUENCE [MRNA]</scope>
</reference>
<feature type="chain" id="PRO_0000089026" description="Actin">
    <location>
        <begin position="1" status="less than"/>
        <end position="164" status="greater than"/>
    </location>
</feature>
<feature type="modified residue" description="Methionine sulfoxide" evidence="1">
    <location>
        <position position="35"/>
    </location>
</feature>
<feature type="modified residue" description="Methionine sulfoxide" evidence="1">
    <location>
        <position position="38"/>
    </location>
</feature>
<feature type="non-terminal residue">
    <location>
        <position position="1"/>
    </location>
</feature>
<feature type="non-terminal residue">
    <location>
        <position position="164"/>
    </location>
</feature>
<dbReference type="EC" id="3.6.4.-" evidence="2"/>
<dbReference type="EMBL" id="Z46873">
    <property type="protein sequence ID" value="CAA86953.1"/>
    <property type="molecule type" value="mRNA"/>
</dbReference>
<dbReference type="SMR" id="Q11212"/>
<dbReference type="GO" id="GO:0005737">
    <property type="term" value="C:cytoplasm"/>
    <property type="evidence" value="ECO:0007669"/>
    <property type="project" value="UniProtKB-KW"/>
</dbReference>
<dbReference type="GO" id="GO:0005856">
    <property type="term" value="C:cytoskeleton"/>
    <property type="evidence" value="ECO:0007669"/>
    <property type="project" value="UniProtKB-SubCell"/>
</dbReference>
<dbReference type="GO" id="GO:0005524">
    <property type="term" value="F:ATP binding"/>
    <property type="evidence" value="ECO:0007669"/>
    <property type="project" value="UniProtKB-KW"/>
</dbReference>
<dbReference type="GO" id="GO:0016787">
    <property type="term" value="F:hydrolase activity"/>
    <property type="evidence" value="ECO:0007669"/>
    <property type="project" value="UniProtKB-KW"/>
</dbReference>
<dbReference type="FunFam" id="2.30.36.70:FF:000001">
    <property type="entry name" value="Actin, alpha skeletal muscle"/>
    <property type="match status" value="1"/>
</dbReference>
<dbReference type="FunFam" id="3.30.420.40:FF:000291">
    <property type="entry name" value="Actin, alpha skeletal muscle"/>
    <property type="match status" value="1"/>
</dbReference>
<dbReference type="Gene3D" id="3.30.420.40">
    <property type="match status" value="2"/>
</dbReference>
<dbReference type="Gene3D" id="2.30.36.70">
    <property type="entry name" value="Actin, Chain A, domain 2"/>
    <property type="match status" value="1"/>
</dbReference>
<dbReference type="InterPro" id="IPR004000">
    <property type="entry name" value="Actin"/>
</dbReference>
<dbReference type="InterPro" id="IPR020902">
    <property type="entry name" value="Actin/actin-like_CS"/>
</dbReference>
<dbReference type="InterPro" id="IPR004001">
    <property type="entry name" value="Actin_CS"/>
</dbReference>
<dbReference type="InterPro" id="IPR043129">
    <property type="entry name" value="ATPase_NBD"/>
</dbReference>
<dbReference type="PANTHER" id="PTHR11937">
    <property type="entry name" value="ACTIN"/>
    <property type="match status" value="1"/>
</dbReference>
<dbReference type="Pfam" id="PF00022">
    <property type="entry name" value="Actin"/>
    <property type="match status" value="1"/>
</dbReference>
<dbReference type="PRINTS" id="PR00190">
    <property type="entry name" value="ACTIN"/>
</dbReference>
<dbReference type="SMART" id="SM00268">
    <property type="entry name" value="ACTIN"/>
    <property type="match status" value="1"/>
</dbReference>
<dbReference type="SUPFAM" id="SSF53067">
    <property type="entry name" value="Actin-like ATPase domain"/>
    <property type="match status" value="2"/>
</dbReference>
<dbReference type="PROSITE" id="PS00406">
    <property type="entry name" value="ACTINS_1"/>
    <property type="match status" value="1"/>
</dbReference>
<dbReference type="PROSITE" id="PS01132">
    <property type="entry name" value="ACTINS_ACT_LIKE"/>
    <property type="match status" value="1"/>
</dbReference>
<organism>
    <name type="scientific">Spodoptera littoralis</name>
    <name type="common">Egyptian cotton leafworm</name>
    <dbReference type="NCBI Taxonomy" id="7109"/>
    <lineage>
        <taxon>Eukaryota</taxon>
        <taxon>Metazoa</taxon>
        <taxon>Ecdysozoa</taxon>
        <taxon>Arthropoda</taxon>
        <taxon>Hexapoda</taxon>
        <taxon>Insecta</taxon>
        <taxon>Pterygota</taxon>
        <taxon>Neoptera</taxon>
        <taxon>Endopterygota</taxon>
        <taxon>Lepidoptera</taxon>
        <taxon>Glossata</taxon>
        <taxon>Ditrysia</taxon>
        <taxon>Noctuoidea</taxon>
        <taxon>Noctuidae</taxon>
        <taxon>Amphipyrinae</taxon>
        <taxon>Spodoptera</taxon>
    </lineage>
</organism>
<keyword id="KW-0067">ATP-binding</keyword>
<keyword id="KW-0963">Cytoplasm</keyword>
<keyword id="KW-0206">Cytoskeleton</keyword>
<keyword id="KW-0378">Hydrolase</keyword>
<keyword id="KW-0547">Nucleotide-binding</keyword>
<keyword id="KW-0558">Oxidation</keyword>